<protein>
    <recommendedName>
        <fullName evidence="1">NADH-quinone oxidoreductase subunit C</fullName>
        <ecNumber evidence="1">7.1.1.-</ecNumber>
    </recommendedName>
    <alternativeName>
        <fullName evidence="1">NADH dehydrogenase I subunit C</fullName>
    </alternativeName>
    <alternativeName>
        <fullName evidence="1">NDH-1 subunit C</fullName>
    </alternativeName>
</protein>
<feature type="chain" id="PRO_0000358141" description="NADH-quinone oxidoreductase subunit C">
    <location>
        <begin position="1"/>
        <end position="236"/>
    </location>
</feature>
<feature type="region of interest" description="Disordered" evidence="2">
    <location>
        <begin position="1"/>
        <end position="20"/>
    </location>
</feature>
<name>NUOC_MYCTA</name>
<evidence type="ECO:0000255" key="1">
    <source>
        <dbReference type="HAMAP-Rule" id="MF_01357"/>
    </source>
</evidence>
<evidence type="ECO:0000256" key="2">
    <source>
        <dbReference type="SAM" id="MobiDB-lite"/>
    </source>
</evidence>
<accession>A5U7G3</accession>
<gene>
    <name evidence="1" type="primary">nuoC</name>
    <name type="ordered locus">MRA_3180</name>
</gene>
<comment type="function">
    <text evidence="1">NDH-1 shuttles electrons from NADH, via FMN and iron-sulfur (Fe-S) centers, to quinones in the respiratory chain. The immediate electron acceptor for the enzyme in this species is believed to be a menaquinone. Couples the redox reaction to proton translocation (for every two electrons transferred, four hydrogen ions are translocated across the cytoplasmic membrane), and thus conserves the redox energy in a proton gradient.</text>
</comment>
<comment type="catalytic activity">
    <reaction evidence="1">
        <text>a quinone + NADH + 5 H(+)(in) = a quinol + NAD(+) + 4 H(+)(out)</text>
        <dbReference type="Rhea" id="RHEA:57888"/>
        <dbReference type="ChEBI" id="CHEBI:15378"/>
        <dbReference type="ChEBI" id="CHEBI:24646"/>
        <dbReference type="ChEBI" id="CHEBI:57540"/>
        <dbReference type="ChEBI" id="CHEBI:57945"/>
        <dbReference type="ChEBI" id="CHEBI:132124"/>
    </reaction>
</comment>
<comment type="subunit">
    <text evidence="1">NDH-1 is composed of 14 different subunits. Subunits NuoB, C, D, E, F, and G constitute the peripheral sector of the complex.</text>
</comment>
<comment type="subcellular location">
    <subcellularLocation>
        <location evidence="1">Cell membrane</location>
        <topology evidence="1">Peripheral membrane protein</topology>
        <orientation evidence="1">Cytoplasmic side</orientation>
    </subcellularLocation>
</comment>
<comment type="similarity">
    <text evidence="1">Belongs to the complex I 30 kDa subunit family.</text>
</comment>
<dbReference type="EC" id="7.1.1.-" evidence="1"/>
<dbReference type="EMBL" id="CP000611">
    <property type="protein sequence ID" value="ABQ74963.1"/>
    <property type="molecule type" value="Genomic_DNA"/>
</dbReference>
<dbReference type="RefSeq" id="WP_003416425.1">
    <property type="nucleotide sequence ID" value="NZ_CP016972.1"/>
</dbReference>
<dbReference type="SMR" id="A5U7G3"/>
<dbReference type="KEGG" id="mra:MRA_3180"/>
<dbReference type="eggNOG" id="COG0852">
    <property type="taxonomic scope" value="Bacteria"/>
</dbReference>
<dbReference type="HOGENOM" id="CLU_042628_4_0_11"/>
<dbReference type="Proteomes" id="UP000001988">
    <property type="component" value="Chromosome"/>
</dbReference>
<dbReference type="GO" id="GO:0005886">
    <property type="term" value="C:plasma membrane"/>
    <property type="evidence" value="ECO:0007669"/>
    <property type="project" value="UniProtKB-SubCell"/>
</dbReference>
<dbReference type="GO" id="GO:0008137">
    <property type="term" value="F:NADH dehydrogenase (ubiquinone) activity"/>
    <property type="evidence" value="ECO:0007669"/>
    <property type="project" value="InterPro"/>
</dbReference>
<dbReference type="GO" id="GO:0050136">
    <property type="term" value="F:NADH:ubiquinone reductase (non-electrogenic) activity"/>
    <property type="evidence" value="ECO:0007669"/>
    <property type="project" value="UniProtKB-UniRule"/>
</dbReference>
<dbReference type="GO" id="GO:0048038">
    <property type="term" value="F:quinone binding"/>
    <property type="evidence" value="ECO:0007669"/>
    <property type="project" value="UniProtKB-KW"/>
</dbReference>
<dbReference type="FunFam" id="3.30.460.80:FF:000006">
    <property type="entry name" value="NADH-quinone oxidoreductase subunit C"/>
    <property type="match status" value="1"/>
</dbReference>
<dbReference type="Gene3D" id="3.30.460.80">
    <property type="entry name" value="NADH:ubiquinone oxidoreductase, 30kDa subunit"/>
    <property type="match status" value="1"/>
</dbReference>
<dbReference type="HAMAP" id="MF_01357">
    <property type="entry name" value="NDH1_NuoC"/>
    <property type="match status" value="1"/>
</dbReference>
<dbReference type="InterPro" id="IPR010218">
    <property type="entry name" value="NADH_DH_suC"/>
</dbReference>
<dbReference type="InterPro" id="IPR037232">
    <property type="entry name" value="NADH_quin_OxRdtase_su_C/D-like"/>
</dbReference>
<dbReference type="InterPro" id="IPR001268">
    <property type="entry name" value="NADH_UbQ_OxRdtase_30kDa_su"/>
</dbReference>
<dbReference type="NCBIfam" id="TIGR01961">
    <property type="entry name" value="NuoC_fam"/>
    <property type="match status" value="1"/>
</dbReference>
<dbReference type="NCBIfam" id="NF005856">
    <property type="entry name" value="PRK07785.1"/>
    <property type="match status" value="1"/>
</dbReference>
<dbReference type="PANTHER" id="PTHR10884:SF14">
    <property type="entry name" value="NADH DEHYDROGENASE [UBIQUINONE] IRON-SULFUR PROTEIN 3, MITOCHONDRIAL"/>
    <property type="match status" value="1"/>
</dbReference>
<dbReference type="PANTHER" id="PTHR10884">
    <property type="entry name" value="NADH DEHYDROGENASE UBIQUINONE IRON-SULFUR PROTEIN 3"/>
    <property type="match status" value="1"/>
</dbReference>
<dbReference type="Pfam" id="PF00329">
    <property type="entry name" value="Complex1_30kDa"/>
    <property type="match status" value="1"/>
</dbReference>
<dbReference type="SUPFAM" id="SSF143243">
    <property type="entry name" value="Nqo5-like"/>
    <property type="match status" value="1"/>
</dbReference>
<proteinExistence type="inferred from homology"/>
<organism>
    <name type="scientific">Mycobacterium tuberculosis (strain ATCC 25177 / H37Ra)</name>
    <dbReference type="NCBI Taxonomy" id="419947"/>
    <lineage>
        <taxon>Bacteria</taxon>
        <taxon>Bacillati</taxon>
        <taxon>Actinomycetota</taxon>
        <taxon>Actinomycetes</taxon>
        <taxon>Mycobacteriales</taxon>
        <taxon>Mycobacteriaceae</taxon>
        <taxon>Mycobacterium</taxon>
        <taxon>Mycobacterium tuberculosis complex</taxon>
    </lineage>
</organism>
<keyword id="KW-1003">Cell membrane</keyword>
<keyword id="KW-0472">Membrane</keyword>
<keyword id="KW-0520">NAD</keyword>
<keyword id="KW-0874">Quinone</keyword>
<keyword id="KW-1185">Reference proteome</keyword>
<keyword id="KW-1278">Translocase</keyword>
<keyword id="KW-0813">Transport</keyword>
<reference key="1">
    <citation type="journal article" date="2008" name="PLoS ONE">
        <title>Genetic basis of virulence attenuation revealed by comparative genomic analysis of Mycobacterium tuberculosis strain H37Ra versus H37Rv.</title>
        <authorList>
            <person name="Zheng H."/>
            <person name="Lu L."/>
            <person name="Wang B."/>
            <person name="Pu S."/>
            <person name="Zhang X."/>
            <person name="Zhu G."/>
            <person name="Shi W."/>
            <person name="Zhang L."/>
            <person name="Wang H."/>
            <person name="Wang S."/>
            <person name="Zhao G."/>
            <person name="Zhang Y."/>
        </authorList>
    </citation>
    <scope>NUCLEOTIDE SEQUENCE [LARGE SCALE GENOMIC DNA]</scope>
    <source>
        <strain>ATCC 25177 / H37Ra</strain>
    </source>
</reference>
<sequence>MSPPNQDAQEGRPDSPTAEVVDVRRGMFGVSGTGDTSGYGRLVRQVVLPGSSPRPYGGYFDDIVDRLAEALRHERVEFEDAVEKVVVYRDELTLHVRRDLLPRVAQRLRDEPELRFELCLGVSGVHYPHETGRELHAVYPLQSITHNRRLRLEVSAPDSDPHIPSLFAIYPTNDWHERETYDFFGIIFDGHPALTRIEMPDDWQGHPQRKDYPLGGIPVEYKGAQIPPPDERRGYN</sequence>